<keyword id="KW-0067">ATP-binding</keyword>
<keyword id="KW-0119">Carbohydrate metabolism</keyword>
<keyword id="KW-0418">Kinase</keyword>
<keyword id="KW-0460">Magnesium</keyword>
<keyword id="KW-0479">Metal-binding</keyword>
<keyword id="KW-0511">Multifunctional enzyme</keyword>
<keyword id="KW-0547">Nucleotide-binding</keyword>
<keyword id="KW-0723">Serine/threonine-protein kinase</keyword>
<keyword id="KW-0808">Transferase</keyword>
<dbReference type="EC" id="2.7.11.-" evidence="1"/>
<dbReference type="EC" id="2.7.4.-" evidence="1"/>
<dbReference type="EMBL" id="CP000813">
    <property type="protein sequence ID" value="ABV63791.1"/>
    <property type="molecule type" value="Genomic_DNA"/>
</dbReference>
<dbReference type="RefSeq" id="WP_003212943.1">
    <property type="nucleotide sequence ID" value="NZ_VEIS01000009.1"/>
</dbReference>
<dbReference type="SMR" id="A8FHS4"/>
<dbReference type="STRING" id="315750.BPUM_3137"/>
<dbReference type="GeneID" id="66361019"/>
<dbReference type="KEGG" id="bpu:BPUM_3137"/>
<dbReference type="eggNOG" id="COG1493">
    <property type="taxonomic scope" value="Bacteria"/>
</dbReference>
<dbReference type="HOGENOM" id="CLU_052030_0_1_9"/>
<dbReference type="OrthoDB" id="9778803at2"/>
<dbReference type="Proteomes" id="UP000001355">
    <property type="component" value="Chromosome"/>
</dbReference>
<dbReference type="GO" id="GO:0005524">
    <property type="term" value="F:ATP binding"/>
    <property type="evidence" value="ECO:0007669"/>
    <property type="project" value="UniProtKB-UniRule"/>
</dbReference>
<dbReference type="GO" id="GO:0000287">
    <property type="term" value="F:magnesium ion binding"/>
    <property type="evidence" value="ECO:0007669"/>
    <property type="project" value="UniProtKB-UniRule"/>
</dbReference>
<dbReference type="GO" id="GO:0000155">
    <property type="term" value="F:phosphorelay sensor kinase activity"/>
    <property type="evidence" value="ECO:0007669"/>
    <property type="project" value="InterPro"/>
</dbReference>
<dbReference type="GO" id="GO:0004674">
    <property type="term" value="F:protein serine/threonine kinase activity"/>
    <property type="evidence" value="ECO:0007669"/>
    <property type="project" value="UniProtKB-KW"/>
</dbReference>
<dbReference type="GO" id="GO:0004712">
    <property type="term" value="F:protein serine/threonine/tyrosine kinase activity"/>
    <property type="evidence" value="ECO:0007669"/>
    <property type="project" value="UniProtKB-UniRule"/>
</dbReference>
<dbReference type="GO" id="GO:0006109">
    <property type="term" value="P:regulation of carbohydrate metabolic process"/>
    <property type="evidence" value="ECO:0007669"/>
    <property type="project" value="UniProtKB-UniRule"/>
</dbReference>
<dbReference type="CDD" id="cd01918">
    <property type="entry name" value="HprK_C"/>
    <property type="match status" value="1"/>
</dbReference>
<dbReference type="FunFam" id="3.40.1390.20:FF:000002">
    <property type="entry name" value="HPr kinase/phosphorylase"/>
    <property type="match status" value="1"/>
</dbReference>
<dbReference type="FunFam" id="3.40.50.300:FF:000174">
    <property type="entry name" value="HPr kinase/phosphorylase"/>
    <property type="match status" value="1"/>
</dbReference>
<dbReference type="Gene3D" id="3.40.1390.20">
    <property type="entry name" value="HprK N-terminal domain-like"/>
    <property type="match status" value="1"/>
</dbReference>
<dbReference type="Gene3D" id="3.40.50.300">
    <property type="entry name" value="P-loop containing nucleotide triphosphate hydrolases"/>
    <property type="match status" value="1"/>
</dbReference>
<dbReference type="HAMAP" id="MF_01249">
    <property type="entry name" value="HPr_kinase"/>
    <property type="match status" value="1"/>
</dbReference>
<dbReference type="InterPro" id="IPR003755">
    <property type="entry name" value="HPr(Ser)_kin/Pase"/>
</dbReference>
<dbReference type="InterPro" id="IPR011104">
    <property type="entry name" value="Hpr_kin/Pase_C"/>
</dbReference>
<dbReference type="InterPro" id="IPR011126">
    <property type="entry name" value="Hpr_kin/Pase_Hpr_N"/>
</dbReference>
<dbReference type="InterPro" id="IPR027417">
    <property type="entry name" value="P-loop_NTPase"/>
</dbReference>
<dbReference type="InterPro" id="IPR028979">
    <property type="entry name" value="Ser_kin/Pase_Hpr-like_N_sf"/>
</dbReference>
<dbReference type="NCBIfam" id="TIGR00679">
    <property type="entry name" value="hpr-ser"/>
    <property type="match status" value="1"/>
</dbReference>
<dbReference type="PANTHER" id="PTHR30305:SF1">
    <property type="entry name" value="HPR KINASE_PHOSPHORYLASE"/>
    <property type="match status" value="1"/>
</dbReference>
<dbReference type="PANTHER" id="PTHR30305">
    <property type="entry name" value="PROTEIN YJDM-RELATED"/>
    <property type="match status" value="1"/>
</dbReference>
<dbReference type="Pfam" id="PF07475">
    <property type="entry name" value="Hpr_kinase_C"/>
    <property type="match status" value="1"/>
</dbReference>
<dbReference type="Pfam" id="PF02603">
    <property type="entry name" value="Hpr_kinase_N"/>
    <property type="match status" value="1"/>
</dbReference>
<dbReference type="SUPFAM" id="SSF75138">
    <property type="entry name" value="HprK N-terminal domain-like"/>
    <property type="match status" value="1"/>
</dbReference>
<dbReference type="SUPFAM" id="SSF53795">
    <property type="entry name" value="PEP carboxykinase-like"/>
    <property type="match status" value="1"/>
</dbReference>
<protein>
    <recommendedName>
        <fullName evidence="1">HPr kinase/phosphorylase</fullName>
        <shortName evidence="1">HPrK/P</shortName>
        <ecNumber evidence="1">2.7.11.-</ecNumber>
        <ecNumber evidence="1">2.7.4.-</ecNumber>
    </recommendedName>
    <alternativeName>
        <fullName evidence="1">HPr(Ser) kinase/phosphorylase</fullName>
    </alternativeName>
</protein>
<gene>
    <name evidence="1" type="primary">hprK</name>
    <name type="ordered locus">BPUM_3137</name>
</gene>
<accession>A8FHS4</accession>
<reference key="1">
    <citation type="journal article" date="2007" name="PLoS ONE">
        <title>Paradoxical DNA repair and peroxide resistance gene conservation in Bacillus pumilus SAFR-032.</title>
        <authorList>
            <person name="Gioia J."/>
            <person name="Yerrapragada S."/>
            <person name="Qin X."/>
            <person name="Jiang H."/>
            <person name="Igboeli O.C."/>
            <person name="Muzny D."/>
            <person name="Dugan-Rocha S."/>
            <person name="Ding Y."/>
            <person name="Hawes A."/>
            <person name="Liu W."/>
            <person name="Perez L."/>
            <person name="Kovar C."/>
            <person name="Dinh H."/>
            <person name="Lee S."/>
            <person name="Nazareth L."/>
            <person name="Blyth P."/>
            <person name="Holder M."/>
            <person name="Buhay C."/>
            <person name="Tirumalai M.R."/>
            <person name="Liu Y."/>
            <person name="Dasgupta I."/>
            <person name="Bokhetache L."/>
            <person name="Fujita M."/>
            <person name="Karouia F."/>
            <person name="Eswara Moorthy P."/>
            <person name="Siefert J."/>
            <person name="Uzman A."/>
            <person name="Buzumbo P."/>
            <person name="Verma A."/>
            <person name="Zwiya H."/>
            <person name="McWilliams B.D."/>
            <person name="Olowu A."/>
            <person name="Clinkenbeard K.D."/>
            <person name="Newcombe D."/>
            <person name="Golebiewski L."/>
            <person name="Petrosino J.F."/>
            <person name="Nicholson W.L."/>
            <person name="Fox G.E."/>
            <person name="Venkateswaran K."/>
            <person name="Highlander S.K."/>
            <person name="Weinstock G.M."/>
        </authorList>
    </citation>
    <scope>NUCLEOTIDE SEQUENCE [LARGE SCALE GENOMIC DNA]</scope>
    <source>
        <strain>SAFR-032</strain>
    </source>
</reference>
<comment type="function">
    <text evidence="1">Catalyzes the ATP- as well as the pyrophosphate-dependent phosphorylation of a specific serine residue in HPr, a phosphocarrier protein of the phosphoenolpyruvate-dependent sugar phosphotransferase system (PTS). HprK/P also catalyzes the pyrophosphate-producing, inorganic phosphate-dependent dephosphorylation (phosphorolysis) of seryl-phosphorylated HPr (P-Ser-HPr). The two antagonistic activities of HprK/P are regulated by several intracellular metabolites, which change their concentration in response to the absence or presence of rapidly metabolisable carbon sources (glucose, fructose, etc.) in the growth medium. Also phosphorylates/dephosphorylates the HPr-like catabolite repression protein crh on a specific serine residue. Therefore, by controlling the phosphorylation state of HPr and crh, HPrK/P is a sensor enzyme that plays a major role in the regulation of carbon metabolism and sugar transport: it mediates carbon catabolite repression (CCR), and regulates PTS-catalyzed carbohydrate uptake and inducer exclusion.</text>
</comment>
<comment type="catalytic activity">
    <reaction evidence="1">
        <text>[HPr protein]-L-serine + ATP = [HPr protein]-O-phospho-L-serine + ADP + H(+)</text>
        <dbReference type="Rhea" id="RHEA:46600"/>
        <dbReference type="Rhea" id="RHEA-COMP:11602"/>
        <dbReference type="Rhea" id="RHEA-COMP:11603"/>
        <dbReference type="ChEBI" id="CHEBI:15378"/>
        <dbReference type="ChEBI" id="CHEBI:29999"/>
        <dbReference type="ChEBI" id="CHEBI:30616"/>
        <dbReference type="ChEBI" id="CHEBI:83421"/>
        <dbReference type="ChEBI" id="CHEBI:456216"/>
    </reaction>
</comment>
<comment type="catalytic activity">
    <reaction evidence="1">
        <text>[HPr protein]-O-phospho-L-serine + phosphate + H(+) = [HPr protein]-L-serine + diphosphate</text>
        <dbReference type="Rhea" id="RHEA:46604"/>
        <dbReference type="Rhea" id="RHEA-COMP:11602"/>
        <dbReference type="Rhea" id="RHEA-COMP:11603"/>
        <dbReference type="ChEBI" id="CHEBI:15378"/>
        <dbReference type="ChEBI" id="CHEBI:29999"/>
        <dbReference type="ChEBI" id="CHEBI:33019"/>
        <dbReference type="ChEBI" id="CHEBI:43474"/>
        <dbReference type="ChEBI" id="CHEBI:83421"/>
    </reaction>
</comment>
<comment type="cofactor">
    <cofactor evidence="1">
        <name>Mg(2+)</name>
        <dbReference type="ChEBI" id="CHEBI:18420"/>
    </cofactor>
</comment>
<comment type="subunit">
    <text evidence="1">Homohexamer.</text>
</comment>
<comment type="domain">
    <text evidence="1">The Walker A ATP-binding motif also binds Pi and PPi.</text>
</comment>
<comment type="miscellaneous">
    <text evidence="1">Both phosphorylation and phosphorolysis are carried out by the same active site and suggest a common mechanism for both reactions.</text>
</comment>
<comment type="similarity">
    <text evidence="1">Belongs to the HPrK/P family.</text>
</comment>
<sequence>MPKVRTKDIMEQFHLELVSGEEGINRPITISDLSRPGIEMAGYFTYYPKERVQLLGKTELSFFEQLPERERKQRMMSLCTDITPAIILSRDREVPKELIEASNENGVPVLRSSLKTTRLSSRLTNFLESKLAPTTAIHGVLVDVYGVGVLLIGKSGVGKSETALELVKRGHRLVADDCVEIRQEDQDTLVGSAPELIEHLLEIRGLGIINVMTLFGAGAVRSYKRITIVMNLELWEQGKQYDRLGLEEEKMRIIDTDVPKLTIPVRPGRNLAVIIEVAAMNFRLKRMGHNAAEQFTSKLADVIEDNGQDE</sequence>
<proteinExistence type="inferred from homology"/>
<feature type="chain" id="PRO_1000067124" description="HPr kinase/phosphorylase">
    <location>
        <begin position="1"/>
        <end position="310"/>
    </location>
</feature>
<feature type="region of interest" description="Important for the catalytic mechanism of both phosphorylation and dephosphorylation" evidence="1">
    <location>
        <begin position="201"/>
        <end position="210"/>
    </location>
</feature>
<feature type="region of interest" description="Important for the catalytic mechanism of dephosphorylation" evidence="1">
    <location>
        <begin position="264"/>
        <end position="269"/>
    </location>
</feature>
<feature type="active site" evidence="1">
    <location>
        <position position="138"/>
    </location>
</feature>
<feature type="active site" evidence="1">
    <location>
        <position position="159"/>
    </location>
</feature>
<feature type="active site" description="Proton acceptor; for phosphorylation activity. Proton donor; for dephosphorylation activity" evidence="1">
    <location>
        <position position="177"/>
    </location>
</feature>
<feature type="active site" evidence="1">
    <location>
        <position position="243"/>
    </location>
</feature>
<feature type="binding site" evidence="1">
    <location>
        <begin position="153"/>
        <end position="160"/>
    </location>
    <ligand>
        <name>ATP</name>
        <dbReference type="ChEBI" id="CHEBI:30616"/>
    </ligand>
</feature>
<feature type="binding site" evidence="1">
    <location>
        <position position="160"/>
    </location>
    <ligand>
        <name>Mg(2+)</name>
        <dbReference type="ChEBI" id="CHEBI:18420"/>
    </ligand>
</feature>
<feature type="binding site" evidence="1">
    <location>
        <position position="202"/>
    </location>
    <ligand>
        <name>Mg(2+)</name>
        <dbReference type="ChEBI" id="CHEBI:18420"/>
    </ligand>
</feature>
<organism>
    <name type="scientific">Bacillus pumilus (strain SAFR-032)</name>
    <dbReference type="NCBI Taxonomy" id="315750"/>
    <lineage>
        <taxon>Bacteria</taxon>
        <taxon>Bacillati</taxon>
        <taxon>Bacillota</taxon>
        <taxon>Bacilli</taxon>
        <taxon>Bacillales</taxon>
        <taxon>Bacillaceae</taxon>
        <taxon>Bacillus</taxon>
    </lineage>
</organism>
<evidence type="ECO:0000255" key="1">
    <source>
        <dbReference type="HAMAP-Rule" id="MF_01249"/>
    </source>
</evidence>
<name>HPRK_BACP2</name>